<protein>
    <recommendedName>
        <fullName evidence="1">Energy-coupling factor transporter ATP-binding protein EcfA2</fullName>
        <shortName evidence="1">ECF transporter A component EcfA2</shortName>
        <ecNumber evidence="1">7.-.-.-</ecNumber>
    </recommendedName>
</protein>
<name>ECFA2_MYCCT</name>
<organism>
    <name type="scientific">Mycoplasma capricolum subsp. capricolum (strain California kid / ATCC 27343 / NCTC 10154)</name>
    <dbReference type="NCBI Taxonomy" id="340047"/>
    <lineage>
        <taxon>Bacteria</taxon>
        <taxon>Bacillati</taxon>
        <taxon>Mycoplasmatota</taxon>
        <taxon>Mollicutes</taxon>
        <taxon>Mycoplasmataceae</taxon>
        <taxon>Mycoplasma</taxon>
    </lineage>
</organism>
<sequence>MDFSKDIILDNVSYTYAKKTPFEFKALNNTSLKFKKNKVTCVIGTTGSGKSTMIQLTNGLIITETGQTIVGDYAIPANIKKIKEVKRLRKEIGLVFQFPEYQLFQETIEKDIAFGPVNLGENKQEAYKKVPELLKLVQLPEDYVKRSPFELSGGQKRRVALAGIIAMDGNTLVLDEPTGGLDPKGEEDFINLFERLNKEYKKRIIMVTHNMDQVLRIADEVIVMHEGKVIDIGSPFEIFSNIELLTKIEIDPPKLYQLMYKLKNKGIDLLNKNIRTIEEFASELAKVLK</sequence>
<reference key="1">
    <citation type="submission" date="2005-09" db="EMBL/GenBank/DDBJ databases">
        <authorList>
            <person name="Glass J.I."/>
            <person name="Lartigue C."/>
            <person name="Pfannkoch C."/>
            <person name="Baden-Tillson H."/>
            <person name="Smith H.O."/>
            <person name="Venter J.C."/>
            <person name="Roske K."/>
            <person name="Wise K.S."/>
            <person name="Calcutt M.J."/>
            <person name="Nelson W.C."/>
            <person name="Nierman W.C."/>
        </authorList>
    </citation>
    <scope>NUCLEOTIDE SEQUENCE [LARGE SCALE GENOMIC DNA]</scope>
    <source>
        <strain>California kid / ATCC 27343 / NCTC 10154</strain>
    </source>
</reference>
<feature type="chain" id="PRO_0000287966" description="Energy-coupling factor transporter ATP-binding protein EcfA2">
    <location>
        <begin position="1"/>
        <end position="289"/>
    </location>
</feature>
<feature type="domain" description="ABC transporter" evidence="1">
    <location>
        <begin position="7"/>
        <end position="251"/>
    </location>
</feature>
<feature type="binding site" evidence="1">
    <location>
        <begin position="44"/>
        <end position="51"/>
    </location>
    <ligand>
        <name>ATP</name>
        <dbReference type="ChEBI" id="CHEBI:30616"/>
    </ligand>
</feature>
<keyword id="KW-0067">ATP-binding</keyword>
<keyword id="KW-1003">Cell membrane</keyword>
<keyword id="KW-0472">Membrane</keyword>
<keyword id="KW-0547">Nucleotide-binding</keyword>
<keyword id="KW-1278">Translocase</keyword>
<keyword id="KW-0813">Transport</keyword>
<accession>Q2SRI2</accession>
<evidence type="ECO:0000255" key="1">
    <source>
        <dbReference type="HAMAP-Rule" id="MF_01710"/>
    </source>
</evidence>
<comment type="function">
    <text evidence="1">ATP-binding (A) component of a common energy-coupling factor (ECF) ABC-transporter complex. Unlike classic ABC transporters this ECF transporter provides the energy necessary to transport a number of different substrates.</text>
</comment>
<comment type="subunit">
    <text evidence="1">Forms a stable energy-coupling factor (ECF) transporter complex composed of 2 membrane-embedded substrate-binding proteins (S component), 2 ATP-binding proteins (A component) and 2 transmembrane proteins (T component).</text>
</comment>
<comment type="subcellular location">
    <subcellularLocation>
        <location evidence="1">Cell membrane</location>
        <topology evidence="1">Peripheral membrane protein</topology>
    </subcellularLocation>
</comment>
<comment type="similarity">
    <text evidence="1">Belongs to the ABC transporter superfamily. Energy-coupling factor EcfA family.</text>
</comment>
<proteinExistence type="inferred from homology"/>
<gene>
    <name evidence="1" type="primary">ecfA2</name>
    <name type="synonym">cbiO2</name>
    <name type="ordered locus">MCAP_0667</name>
</gene>
<dbReference type="EC" id="7.-.-.-" evidence="1"/>
<dbReference type="EMBL" id="CP000123">
    <property type="protein sequence ID" value="ABC01119.1"/>
    <property type="molecule type" value="Genomic_DNA"/>
</dbReference>
<dbReference type="SMR" id="Q2SRI2"/>
<dbReference type="KEGG" id="mcp:MCAP_0667"/>
<dbReference type="HOGENOM" id="CLU_000604_1_22_14"/>
<dbReference type="PhylomeDB" id="Q2SRI2"/>
<dbReference type="Proteomes" id="UP000001928">
    <property type="component" value="Chromosome"/>
</dbReference>
<dbReference type="GO" id="GO:0043190">
    <property type="term" value="C:ATP-binding cassette (ABC) transporter complex"/>
    <property type="evidence" value="ECO:0007669"/>
    <property type="project" value="TreeGrafter"/>
</dbReference>
<dbReference type="GO" id="GO:0005524">
    <property type="term" value="F:ATP binding"/>
    <property type="evidence" value="ECO:0007669"/>
    <property type="project" value="UniProtKB-KW"/>
</dbReference>
<dbReference type="GO" id="GO:0016887">
    <property type="term" value="F:ATP hydrolysis activity"/>
    <property type="evidence" value="ECO:0007669"/>
    <property type="project" value="InterPro"/>
</dbReference>
<dbReference type="GO" id="GO:0042626">
    <property type="term" value="F:ATPase-coupled transmembrane transporter activity"/>
    <property type="evidence" value="ECO:0007669"/>
    <property type="project" value="TreeGrafter"/>
</dbReference>
<dbReference type="CDD" id="cd03225">
    <property type="entry name" value="ABC_cobalt_CbiO_domain1"/>
    <property type="match status" value="1"/>
</dbReference>
<dbReference type="FunFam" id="3.40.50.300:FF:000224">
    <property type="entry name" value="Energy-coupling factor transporter ATP-binding protein EcfA"/>
    <property type="match status" value="1"/>
</dbReference>
<dbReference type="Gene3D" id="3.40.50.300">
    <property type="entry name" value="P-loop containing nucleotide triphosphate hydrolases"/>
    <property type="match status" value="1"/>
</dbReference>
<dbReference type="InterPro" id="IPR003593">
    <property type="entry name" value="AAA+_ATPase"/>
</dbReference>
<dbReference type="InterPro" id="IPR003439">
    <property type="entry name" value="ABC_transporter-like_ATP-bd"/>
</dbReference>
<dbReference type="InterPro" id="IPR017871">
    <property type="entry name" value="ABC_transporter-like_CS"/>
</dbReference>
<dbReference type="InterPro" id="IPR015856">
    <property type="entry name" value="ABC_transpr_CbiO/EcfA_su"/>
</dbReference>
<dbReference type="InterPro" id="IPR050095">
    <property type="entry name" value="ECF_ABC_transporter_ATP-bd"/>
</dbReference>
<dbReference type="InterPro" id="IPR030946">
    <property type="entry name" value="EcfA2"/>
</dbReference>
<dbReference type="InterPro" id="IPR027417">
    <property type="entry name" value="P-loop_NTPase"/>
</dbReference>
<dbReference type="NCBIfam" id="TIGR04521">
    <property type="entry name" value="ECF_ATPase_2"/>
    <property type="match status" value="1"/>
</dbReference>
<dbReference type="PANTHER" id="PTHR43553:SF27">
    <property type="entry name" value="ENERGY-COUPLING FACTOR TRANSPORTER ATP-BINDING PROTEIN ECFA2"/>
    <property type="match status" value="1"/>
</dbReference>
<dbReference type="PANTHER" id="PTHR43553">
    <property type="entry name" value="HEAVY METAL TRANSPORTER"/>
    <property type="match status" value="1"/>
</dbReference>
<dbReference type="Pfam" id="PF00005">
    <property type="entry name" value="ABC_tran"/>
    <property type="match status" value="1"/>
</dbReference>
<dbReference type="SMART" id="SM00382">
    <property type="entry name" value="AAA"/>
    <property type="match status" value="1"/>
</dbReference>
<dbReference type="SUPFAM" id="SSF52540">
    <property type="entry name" value="P-loop containing nucleoside triphosphate hydrolases"/>
    <property type="match status" value="1"/>
</dbReference>
<dbReference type="PROSITE" id="PS00211">
    <property type="entry name" value="ABC_TRANSPORTER_1"/>
    <property type="match status" value="1"/>
</dbReference>
<dbReference type="PROSITE" id="PS50893">
    <property type="entry name" value="ABC_TRANSPORTER_2"/>
    <property type="match status" value="1"/>
</dbReference>
<dbReference type="PROSITE" id="PS51246">
    <property type="entry name" value="CBIO"/>
    <property type="match status" value="1"/>
</dbReference>